<organism>
    <name type="scientific">Helicobacter pylori (strain J99 / ATCC 700824)</name>
    <name type="common">Campylobacter pylori J99</name>
    <dbReference type="NCBI Taxonomy" id="85963"/>
    <lineage>
        <taxon>Bacteria</taxon>
        <taxon>Pseudomonadati</taxon>
        <taxon>Campylobacterota</taxon>
        <taxon>Epsilonproteobacteria</taxon>
        <taxon>Campylobacterales</taxon>
        <taxon>Helicobacteraceae</taxon>
        <taxon>Helicobacter</taxon>
    </lineage>
</organism>
<name>RLMH_HELPJ</name>
<evidence type="ECO:0000255" key="1">
    <source>
        <dbReference type="HAMAP-Rule" id="MF_00658"/>
    </source>
</evidence>
<reference key="1">
    <citation type="journal article" date="1999" name="Nature">
        <title>Genomic sequence comparison of two unrelated isolates of the human gastric pathogen Helicobacter pylori.</title>
        <authorList>
            <person name="Alm R.A."/>
            <person name="Ling L.-S.L."/>
            <person name="Moir D.T."/>
            <person name="King B.L."/>
            <person name="Brown E.D."/>
            <person name="Doig P.C."/>
            <person name="Smith D.R."/>
            <person name="Noonan B."/>
            <person name="Guild B.C."/>
            <person name="deJonge B.L."/>
            <person name="Carmel G."/>
            <person name="Tummino P.J."/>
            <person name="Caruso A."/>
            <person name="Uria-Nickelsen M."/>
            <person name="Mills D.M."/>
            <person name="Ives C."/>
            <person name="Gibson R."/>
            <person name="Merberg D."/>
            <person name="Mills S.D."/>
            <person name="Jiang Q."/>
            <person name="Taylor D.E."/>
            <person name="Vovis G.F."/>
            <person name="Trust T.J."/>
        </authorList>
    </citation>
    <scope>NUCLEOTIDE SEQUENCE [LARGE SCALE GENOMIC DNA]</scope>
    <source>
        <strain>J99 / ATCC 700824</strain>
    </source>
</reference>
<dbReference type="EC" id="2.1.1.177" evidence="1"/>
<dbReference type="EMBL" id="AE001439">
    <property type="protein sequence ID" value="AAD06467.1"/>
    <property type="molecule type" value="Genomic_DNA"/>
</dbReference>
<dbReference type="PIR" id="D71875">
    <property type="entry name" value="D71875"/>
</dbReference>
<dbReference type="RefSeq" id="WP_001203860.1">
    <property type="nucleotide sequence ID" value="NC_000921.1"/>
</dbReference>
<dbReference type="SMR" id="Q9ZKQ2"/>
<dbReference type="KEGG" id="hpj:jhp_0883"/>
<dbReference type="PATRIC" id="fig|85963.30.peg.78"/>
<dbReference type="eggNOG" id="COG1576">
    <property type="taxonomic scope" value="Bacteria"/>
</dbReference>
<dbReference type="Proteomes" id="UP000000804">
    <property type="component" value="Chromosome"/>
</dbReference>
<dbReference type="GO" id="GO:0005737">
    <property type="term" value="C:cytoplasm"/>
    <property type="evidence" value="ECO:0007669"/>
    <property type="project" value="UniProtKB-SubCell"/>
</dbReference>
<dbReference type="GO" id="GO:0070038">
    <property type="term" value="F:rRNA (pseudouridine-N3-)-methyltransferase activity"/>
    <property type="evidence" value="ECO:0007669"/>
    <property type="project" value="UniProtKB-UniRule"/>
</dbReference>
<dbReference type="CDD" id="cd18081">
    <property type="entry name" value="RlmH-like"/>
    <property type="match status" value="1"/>
</dbReference>
<dbReference type="Gene3D" id="3.40.1280.10">
    <property type="match status" value="1"/>
</dbReference>
<dbReference type="HAMAP" id="MF_00658">
    <property type="entry name" value="23SrRNA_methyltr_H"/>
    <property type="match status" value="1"/>
</dbReference>
<dbReference type="InterPro" id="IPR029028">
    <property type="entry name" value="Alpha/beta_knot_MTases"/>
</dbReference>
<dbReference type="InterPro" id="IPR003742">
    <property type="entry name" value="RlmH-like"/>
</dbReference>
<dbReference type="InterPro" id="IPR029026">
    <property type="entry name" value="tRNA_m1G_MTases_N"/>
</dbReference>
<dbReference type="NCBIfam" id="NF000987">
    <property type="entry name" value="PRK00103.2-1"/>
    <property type="match status" value="1"/>
</dbReference>
<dbReference type="PANTHER" id="PTHR33603">
    <property type="entry name" value="METHYLTRANSFERASE"/>
    <property type="match status" value="1"/>
</dbReference>
<dbReference type="PANTHER" id="PTHR33603:SF1">
    <property type="entry name" value="RIBOSOMAL RNA LARGE SUBUNIT METHYLTRANSFERASE H"/>
    <property type="match status" value="1"/>
</dbReference>
<dbReference type="Pfam" id="PF02590">
    <property type="entry name" value="SPOUT_MTase"/>
    <property type="match status" value="1"/>
</dbReference>
<dbReference type="PIRSF" id="PIRSF004505">
    <property type="entry name" value="MT_bac"/>
    <property type="match status" value="1"/>
</dbReference>
<dbReference type="SUPFAM" id="SSF75217">
    <property type="entry name" value="alpha/beta knot"/>
    <property type="match status" value="1"/>
</dbReference>
<keyword id="KW-0963">Cytoplasm</keyword>
<keyword id="KW-0489">Methyltransferase</keyword>
<keyword id="KW-0698">rRNA processing</keyword>
<keyword id="KW-0949">S-adenosyl-L-methionine</keyword>
<keyword id="KW-0808">Transferase</keyword>
<sequence>MRCVVYSIAKNSPLELVKSYQKQCKRFDCELELVDLFPKNTANAQKVSKELAQKSYSLAFEPYLSPKAKNIALHPEAQRGDSFAFSKMLENHLNINFFIAGAYGFEEKFLKDCQAWSLSEMTFSHEVAKIVLCEQIYRALSIIFKHPYHK</sequence>
<protein>
    <recommendedName>
        <fullName evidence="1">Ribosomal RNA large subunit methyltransferase H</fullName>
        <ecNumber evidence="1">2.1.1.177</ecNumber>
    </recommendedName>
    <alternativeName>
        <fullName evidence="1">23S rRNA (pseudouridine1915-N3)-methyltransferase</fullName>
    </alternativeName>
    <alternativeName>
        <fullName evidence="1">23S rRNA m3Psi1915 methyltransferase</fullName>
    </alternativeName>
    <alternativeName>
        <fullName evidence="1">rRNA (pseudouridine-N3-)-methyltransferase RlmH</fullName>
    </alternativeName>
</protein>
<gene>
    <name evidence="1" type="primary">rlmH</name>
    <name type="ordered locus">jhp_0883</name>
</gene>
<feature type="chain" id="PRO_0000198129" description="Ribosomal RNA large subunit methyltransferase H">
    <location>
        <begin position="1"/>
        <end position="150"/>
    </location>
</feature>
<feature type="binding site" evidence="1">
    <location>
        <position position="100"/>
    </location>
    <ligand>
        <name>S-adenosyl-L-methionine</name>
        <dbReference type="ChEBI" id="CHEBI:59789"/>
    </ligand>
</feature>
<feature type="binding site" evidence="1">
    <location>
        <begin position="118"/>
        <end position="123"/>
    </location>
    <ligand>
        <name>S-adenosyl-L-methionine</name>
        <dbReference type="ChEBI" id="CHEBI:59789"/>
    </ligand>
</feature>
<proteinExistence type="inferred from homology"/>
<accession>Q9ZKQ2</accession>
<comment type="function">
    <text evidence="1">Specifically methylates the pseudouridine at position 1915 (m3Psi1915) in 23S rRNA.</text>
</comment>
<comment type="catalytic activity">
    <reaction evidence="1">
        <text>pseudouridine(1915) in 23S rRNA + S-adenosyl-L-methionine = N(3)-methylpseudouridine(1915) in 23S rRNA + S-adenosyl-L-homocysteine + H(+)</text>
        <dbReference type="Rhea" id="RHEA:42752"/>
        <dbReference type="Rhea" id="RHEA-COMP:10221"/>
        <dbReference type="Rhea" id="RHEA-COMP:10222"/>
        <dbReference type="ChEBI" id="CHEBI:15378"/>
        <dbReference type="ChEBI" id="CHEBI:57856"/>
        <dbReference type="ChEBI" id="CHEBI:59789"/>
        <dbReference type="ChEBI" id="CHEBI:65314"/>
        <dbReference type="ChEBI" id="CHEBI:74486"/>
        <dbReference type="EC" id="2.1.1.177"/>
    </reaction>
</comment>
<comment type="subunit">
    <text evidence="1">Homodimer.</text>
</comment>
<comment type="subcellular location">
    <subcellularLocation>
        <location evidence="1">Cytoplasm</location>
    </subcellularLocation>
</comment>
<comment type="similarity">
    <text evidence="1">Belongs to the RNA methyltransferase RlmH family.</text>
</comment>